<keyword id="KW-0325">Glycoprotein</keyword>
<keyword id="KW-0646">Protease inhibitor</keyword>
<keyword id="KW-1185">Reference proteome</keyword>
<keyword id="KW-0964">Secreted</keyword>
<keyword id="KW-0722">Serine protease inhibitor</keyword>
<keyword id="KW-0732">Signal</keyword>
<reference key="1">
    <citation type="journal article" date="2005" name="Science">
        <title>The transcriptional landscape of the mammalian genome.</title>
        <authorList>
            <person name="Carninci P."/>
            <person name="Kasukawa T."/>
            <person name="Katayama S."/>
            <person name="Gough J."/>
            <person name="Frith M.C."/>
            <person name="Maeda N."/>
            <person name="Oyama R."/>
            <person name="Ravasi T."/>
            <person name="Lenhard B."/>
            <person name="Wells C."/>
            <person name="Kodzius R."/>
            <person name="Shimokawa K."/>
            <person name="Bajic V.B."/>
            <person name="Brenner S.E."/>
            <person name="Batalov S."/>
            <person name="Forrest A.R."/>
            <person name="Zavolan M."/>
            <person name="Davis M.J."/>
            <person name="Wilming L.G."/>
            <person name="Aidinis V."/>
            <person name="Allen J.E."/>
            <person name="Ambesi-Impiombato A."/>
            <person name="Apweiler R."/>
            <person name="Aturaliya R.N."/>
            <person name="Bailey T.L."/>
            <person name="Bansal M."/>
            <person name="Baxter L."/>
            <person name="Beisel K.W."/>
            <person name="Bersano T."/>
            <person name="Bono H."/>
            <person name="Chalk A.M."/>
            <person name="Chiu K.P."/>
            <person name="Choudhary V."/>
            <person name="Christoffels A."/>
            <person name="Clutterbuck D.R."/>
            <person name="Crowe M.L."/>
            <person name="Dalla E."/>
            <person name="Dalrymple B.P."/>
            <person name="de Bono B."/>
            <person name="Della Gatta G."/>
            <person name="di Bernardo D."/>
            <person name="Down T."/>
            <person name="Engstrom P."/>
            <person name="Fagiolini M."/>
            <person name="Faulkner G."/>
            <person name="Fletcher C.F."/>
            <person name="Fukushima T."/>
            <person name="Furuno M."/>
            <person name="Futaki S."/>
            <person name="Gariboldi M."/>
            <person name="Georgii-Hemming P."/>
            <person name="Gingeras T.R."/>
            <person name="Gojobori T."/>
            <person name="Green R.E."/>
            <person name="Gustincich S."/>
            <person name="Harbers M."/>
            <person name="Hayashi Y."/>
            <person name="Hensch T.K."/>
            <person name="Hirokawa N."/>
            <person name="Hill D."/>
            <person name="Huminiecki L."/>
            <person name="Iacono M."/>
            <person name="Ikeo K."/>
            <person name="Iwama A."/>
            <person name="Ishikawa T."/>
            <person name="Jakt M."/>
            <person name="Kanapin A."/>
            <person name="Katoh M."/>
            <person name="Kawasawa Y."/>
            <person name="Kelso J."/>
            <person name="Kitamura H."/>
            <person name="Kitano H."/>
            <person name="Kollias G."/>
            <person name="Krishnan S.P."/>
            <person name="Kruger A."/>
            <person name="Kummerfeld S.K."/>
            <person name="Kurochkin I.V."/>
            <person name="Lareau L.F."/>
            <person name="Lazarevic D."/>
            <person name="Lipovich L."/>
            <person name="Liu J."/>
            <person name="Liuni S."/>
            <person name="McWilliam S."/>
            <person name="Madan Babu M."/>
            <person name="Madera M."/>
            <person name="Marchionni L."/>
            <person name="Matsuda H."/>
            <person name="Matsuzawa S."/>
            <person name="Miki H."/>
            <person name="Mignone F."/>
            <person name="Miyake S."/>
            <person name="Morris K."/>
            <person name="Mottagui-Tabar S."/>
            <person name="Mulder N."/>
            <person name="Nakano N."/>
            <person name="Nakauchi H."/>
            <person name="Ng P."/>
            <person name="Nilsson R."/>
            <person name="Nishiguchi S."/>
            <person name="Nishikawa S."/>
            <person name="Nori F."/>
            <person name="Ohara O."/>
            <person name="Okazaki Y."/>
            <person name="Orlando V."/>
            <person name="Pang K.C."/>
            <person name="Pavan W.J."/>
            <person name="Pavesi G."/>
            <person name="Pesole G."/>
            <person name="Petrovsky N."/>
            <person name="Piazza S."/>
            <person name="Reed J."/>
            <person name="Reid J.F."/>
            <person name="Ring B.Z."/>
            <person name="Ringwald M."/>
            <person name="Rost B."/>
            <person name="Ruan Y."/>
            <person name="Salzberg S.L."/>
            <person name="Sandelin A."/>
            <person name="Schneider C."/>
            <person name="Schoenbach C."/>
            <person name="Sekiguchi K."/>
            <person name="Semple C.A."/>
            <person name="Seno S."/>
            <person name="Sessa L."/>
            <person name="Sheng Y."/>
            <person name="Shibata Y."/>
            <person name="Shimada H."/>
            <person name="Shimada K."/>
            <person name="Silva D."/>
            <person name="Sinclair B."/>
            <person name="Sperling S."/>
            <person name="Stupka E."/>
            <person name="Sugiura K."/>
            <person name="Sultana R."/>
            <person name="Takenaka Y."/>
            <person name="Taki K."/>
            <person name="Tammoja K."/>
            <person name="Tan S.L."/>
            <person name="Tang S."/>
            <person name="Taylor M.S."/>
            <person name="Tegner J."/>
            <person name="Teichmann S.A."/>
            <person name="Ueda H.R."/>
            <person name="van Nimwegen E."/>
            <person name="Verardo R."/>
            <person name="Wei C.L."/>
            <person name="Yagi K."/>
            <person name="Yamanishi H."/>
            <person name="Zabarovsky E."/>
            <person name="Zhu S."/>
            <person name="Zimmer A."/>
            <person name="Hide W."/>
            <person name="Bult C."/>
            <person name="Grimmond S.M."/>
            <person name="Teasdale R.D."/>
            <person name="Liu E.T."/>
            <person name="Brusic V."/>
            <person name="Quackenbush J."/>
            <person name="Wahlestedt C."/>
            <person name="Mattick J.S."/>
            <person name="Hume D.A."/>
            <person name="Kai C."/>
            <person name="Sasaki D."/>
            <person name="Tomaru Y."/>
            <person name="Fukuda S."/>
            <person name="Kanamori-Katayama M."/>
            <person name="Suzuki M."/>
            <person name="Aoki J."/>
            <person name="Arakawa T."/>
            <person name="Iida J."/>
            <person name="Imamura K."/>
            <person name="Itoh M."/>
            <person name="Kato T."/>
            <person name="Kawaji H."/>
            <person name="Kawagashira N."/>
            <person name="Kawashima T."/>
            <person name="Kojima M."/>
            <person name="Kondo S."/>
            <person name="Konno H."/>
            <person name="Nakano K."/>
            <person name="Ninomiya N."/>
            <person name="Nishio T."/>
            <person name="Okada M."/>
            <person name="Plessy C."/>
            <person name="Shibata K."/>
            <person name="Shiraki T."/>
            <person name="Suzuki S."/>
            <person name="Tagami M."/>
            <person name="Waki K."/>
            <person name="Watahiki A."/>
            <person name="Okamura-Oho Y."/>
            <person name="Suzuki H."/>
            <person name="Kawai J."/>
            <person name="Hayashizaki Y."/>
        </authorList>
    </citation>
    <scope>NUCLEOTIDE SEQUENCE [LARGE SCALE MRNA]</scope>
    <source>
        <strain>C57BL/6J</strain>
        <tissue>Eye</tissue>
        <tissue>Head</tissue>
        <tissue>Medulla oblongata</tissue>
    </source>
</reference>
<reference key="2">
    <citation type="journal article" date="2009" name="PLoS Biol.">
        <title>Lineage-specific biology revealed by a finished genome assembly of the mouse.</title>
        <authorList>
            <person name="Church D.M."/>
            <person name="Goodstadt L."/>
            <person name="Hillier L.W."/>
            <person name="Zody M.C."/>
            <person name="Goldstein S."/>
            <person name="She X."/>
            <person name="Bult C.J."/>
            <person name="Agarwala R."/>
            <person name="Cherry J.L."/>
            <person name="DiCuccio M."/>
            <person name="Hlavina W."/>
            <person name="Kapustin Y."/>
            <person name="Meric P."/>
            <person name="Maglott D."/>
            <person name="Birtle Z."/>
            <person name="Marques A.C."/>
            <person name="Graves T."/>
            <person name="Zhou S."/>
            <person name="Teague B."/>
            <person name="Potamousis K."/>
            <person name="Churas C."/>
            <person name="Place M."/>
            <person name="Herschleb J."/>
            <person name="Runnheim R."/>
            <person name="Forrest D."/>
            <person name="Amos-Landgraf J."/>
            <person name="Schwartz D.C."/>
            <person name="Cheng Z."/>
            <person name="Lindblad-Toh K."/>
            <person name="Eichler E.E."/>
            <person name="Ponting C.P."/>
        </authorList>
    </citation>
    <scope>NUCLEOTIDE SEQUENCE [LARGE SCALE GENOMIC DNA]</scope>
    <source>
        <strain>C57BL/6J</strain>
    </source>
</reference>
<reference key="3">
    <citation type="journal article" date="2004" name="Genome Res.">
        <title>The status, quality, and expansion of the NIH full-length cDNA project: the Mammalian Gene Collection (MGC).</title>
        <authorList>
            <consortium name="The MGC Project Team"/>
        </authorList>
    </citation>
    <scope>NUCLEOTIDE SEQUENCE [LARGE SCALE MRNA]</scope>
    <source>
        <strain>FVB/N</strain>
        <tissue>Mammary tumor</tissue>
    </source>
</reference>
<reference key="4">
    <citation type="journal article" date="2010" name="Cell">
        <title>A tissue-specific atlas of mouse protein phosphorylation and expression.</title>
        <authorList>
            <person name="Huttlin E.L."/>
            <person name="Jedrychowski M.P."/>
            <person name="Elias J.E."/>
            <person name="Goswami T."/>
            <person name="Rad R."/>
            <person name="Beausoleil S.A."/>
            <person name="Villen J."/>
            <person name="Haas W."/>
            <person name="Sowa M.E."/>
            <person name="Gygi S.P."/>
        </authorList>
    </citation>
    <scope>IDENTIFICATION BY MASS SPECTROMETRY [LARGE SCALE ANALYSIS]</scope>
    <source>
        <tissue>Brain</tissue>
    </source>
</reference>
<organism>
    <name type="scientific">Mus musculus</name>
    <name type="common">Mouse</name>
    <dbReference type="NCBI Taxonomy" id="10090"/>
    <lineage>
        <taxon>Eukaryota</taxon>
        <taxon>Metazoa</taxon>
        <taxon>Chordata</taxon>
        <taxon>Craniata</taxon>
        <taxon>Vertebrata</taxon>
        <taxon>Euteleostomi</taxon>
        <taxon>Mammalia</taxon>
        <taxon>Eutheria</taxon>
        <taxon>Euarchontoglires</taxon>
        <taxon>Glires</taxon>
        <taxon>Rodentia</taxon>
        <taxon>Myomorpha</taxon>
        <taxon>Muroidea</taxon>
        <taxon>Muridae</taxon>
        <taxon>Murinae</taxon>
        <taxon>Mus</taxon>
        <taxon>Mus</taxon>
    </lineage>
</organism>
<evidence type="ECO:0000250" key="1"/>
<evidence type="ECO:0000255" key="2"/>
<evidence type="ECO:0000255" key="3">
    <source>
        <dbReference type="PROSITE-ProRule" id="PRU00219"/>
    </source>
</evidence>
<evidence type="ECO:0000255" key="4">
    <source>
        <dbReference type="PROSITE-ProRule" id="PRU00801"/>
    </source>
</evidence>
<evidence type="ECO:0000256" key="5">
    <source>
        <dbReference type="SAM" id="MobiDB-lite"/>
    </source>
</evidence>
<evidence type="ECO:0000305" key="6"/>
<comment type="function">
    <text evidence="1">May act as a tumor suppressor.</text>
</comment>
<comment type="subcellular location">
    <subcellularLocation>
        <location evidence="1">Secreted</location>
    </subcellularLocation>
</comment>
<comment type="similarity">
    <text evidence="6">Belongs to the ITIH family.</text>
</comment>
<protein>
    <recommendedName>
        <fullName>Inter-alpha-trypsin inhibitor heavy chain H5</fullName>
        <shortName>ITI heavy chain H5</shortName>
        <shortName>ITI-HC5</shortName>
        <shortName>Inter-alpha-inhibitor heavy chain 5</shortName>
    </recommendedName>
</protein>
<dbReference type="EMBL" id="AK140756">
    <property type="protein sequence ID" value="BAE24467.1"/>
    <property type="molecule type" value="mRNA"/>
</dbReference>
<dbReference type="EMBL" id="AK087428">
    <property type="protein sequence ID" value="BAC39871.1"/>
    <property type="molecule type" value="mRNA"/>
</dbReference>
<dbReference type="EMBL" id="AK134707">
    <property type="protein sequence ID" value="BAE22250.1"/>
    <property type="molecule type" value="mRNA"/>
</dbReference>
<dbReference type="EMBL" id="AL772367">
    <property type="status" value="NOT_ANNOTATED_CDS"/>
    <property type="molecule type" value="Genomic_DNA"/>
</dbReference>
<dbReference type="EMBL" id="AL953853">
    <property type="status" value="NOT_ANNOTATED_CDS"/>
    <property type="molecule type" value="Genomic_DNA"/>
</dbReference>
<dbReference type="EMBL" id="BC043314">
    <property type="protein sequence ID" value="AAH43314.2"/>
    <property type="molecule type" value="mRNA"/>
</dbReference>
<dbReference type="EMBL" id="BC062196">
    <property type="protein sequence ID" value="AAH62196.1"/>
    <property type="molecule type" value="mRNA"/>
</dbReference>
<dbReference type="CCDS" id="CCDS15678.1"/>
<dbReference type="RefSeq" id="NP_766059.1">
    <property type="nucleotide sequence ID" value="NM_172471.2"/>
</dbReference>
<dbReference type="SMR" id="Q8BJD1"/>
<dbReference type="BioGRID" id="229073">
    <property type="interactions" value="2"/>
</dbReference>
<dbReference type="FunCoup" id="Q8BJD1">
    <property type="interactions" value="59"/>
</dbReference>
<dbReference type="STRING" id="10090.ENSMUSP00000026886"/>
<dbReference type="GlyConnect" id="2408">
    <property type="glycosylation" value="3 N-Linked glycans (2 sites)"/>
</dbReference>
<dbReference type="GlyCosmos" id="Q8BJD1">
    <property type="glycosylation" value="8 sites, 3 glycans"/>
</dbReference>
<dbReference type="GlyGen" id="Q8BJD1">
    <property type="glycosylation" value="9 sites, 6 N-linked glycans (4 sites)"/>
</dbReference>
<dbReference type="iPTMnet" id="Q8BJD1"/>
<dbReference type="PhosphoSitePlus" id="Q8BJD1"/>
<dbReference type="PaxDb" id="10090-ENSMUSP00000026886"/>
<dbReference type="PeptideAtlas" id="Q8BJD1"/>
<dbReference type="ProteomicsDB" id="269410"/>
<dbReference type="Antibodypedia" id="52114">
    <property type="antibodies" value="106 antibodies from 12 providers"/>
</dbReference>
<dbReference type="DNASU" id="209378"/>
<dbReference type="Ensembl" id="ENSMUST00000026886.8">
    <property type="protein sequence ID" value="ENSMUSP00000026886.8"/>
    <property type="gene ID" value="ENSMUSG00000025780.8"/>
</dbReference>
<dbReference type="GeneID" id="209378"/>
<dbReference type="KEGG" id="mmu:209378"/>
<dbReference type="UCSC" id="uc008ihr.1">
    <property type="organism name" value="mouse"/>
</dbReference>
<dbReference type="AGR" id="MGI:1925751"/>
<dbReference type="CTD" id="80760"/>
<dbReference type="MGI" id="MGI:1925751">
    <property type="gene designation" value="Itih5"/>
</dbReference>
<dbReference type="VEuPathDB" id="HostDB:ENSMUSG00000025780"/>
<dbReference type="eggNOG" id="ENOG502QPS2">
    <property type="taxonomic scope" value="Eukaryota"/>
</dbReference>
<dbReference type="GeneTree" id="ENSGT00940000158317"/>
<dbReference type="HOGENOM" id="CLU_008101_0_1_1"/>
<dbReference type="InParanoid" id="Q8BJD1"/>
<dbReference type="OMA" id="TWSYLTI"/>
<dbReference type="OrthoDB" id="299997at2759"/>
<dbReference type="PhylomeDB" id="Q8BJD1"/>
<dbReference type="TreeFam" id="TF328982"/>
<dbReference type="BioGRID-ORCS" id="209378">
    <property type="hits" value="0 hits in 76 CRISPR screens"/>
</dbReference>
<dbReference type="ChiTaRS" id="Itih5">
    <property type="organism name" value="mouse"/>
</dbReference>
<dbReference type="PRO" id="PR:Q8BJD1"/>
<dbReference type="Proteomes" id="UP000000589">
    <property type="component" value="Chromosome 2"/>
</dbReference>
<dbReference type="RNAct" id="Q8BJD1">
    <property type="molecule type" value="protein"/>
</dbReference>
<dbReference type="Bgee" id="ENSMUSG00000025780">
    <property type="expression patterns" value="Expressed in vestibular membrane of cochlear duct and 269 other cell types or tissues"/>
</dbReference>
<dbReference type="GO" id="GO:0062023">
    <property type="term" value="C:collagen-containing extracellular matrix"/>
    <property type="evidence" value="ECO:0007005"/>
    <property type="project" value="BHF-UCL"/>
</dbReference>
<dbReference type="GO" id="GO:0005576">
    <property type="term" value="C:extracellular region"/>
    <property type="evidence" value="ECO:0007669"/>
    <property type="project" value="UniProtKB-SubCell"/>
</dbReference>
<dbReference type="GO" id="GO:0004867">
    <property type="term" value="F:serine-type endopeptidase inhibitor activity"/>
    <property type="evidence" value="ECO:0007669"/>
    <property type="project" value="UniProtKB-KW"/>
</dbReference>
<dbReference type="GO" id="GO:0030212">
    <property type="term" value="P:hyaluronan metabolic process"/>
    <property type="evidence" value="ECO:0007669"/>
    <property type="project" value="InterPro"/>
</dbReference>
<dbReference type="GO" id="GO:0060065">
    <property type="term" value="P:uterus development"/>
    <property type="evidence" value="ECO:0000314"/>
    <property type="project" value="MGI"/>
</dbReference>
<dbReference type="CDD" id="cd01461">
    <property type="entry name" value="vWA_interalpha_trypsin_inhibitor"/>
    <property type="match status" value="1"/>
</dbReference>
<dbReference type="FunFam" id="3.40.50.410:FF:000013">
    <property type="entry name" value="inter-alpha-trypsin inhibitor heavy chain H2"/>
    <property type="match status" value="1"/>
</dbReference>
<dbReference type="Gene3D" id="3.40.50.410">
    <property type="entry name" value="von Willebrand factor, type A domain"/>
    <property type="match status" value="1"/>
</dbReference>
<dbReference type="InterPro" id="IPR010600">
    <property type="entry name" value="ITI_HC_C"/>
</dbReference>
<dbReference type="InterPro" id="IPR050934">
    <property type="entry name" value="ITIH"/>
</dbReference>
<dbReference type="InterPro" id="IPR013694">
    <property type="entry name" value="VIT"/>
</dbReference>
<dbReference type="InterPro" id="IPR002035">
    <property type="entry name" value="VWF_A"/>
</dbReference>
<dbReference type="InterPro" id="IPR036465">
    <property type="entry name" value="vWFA_dom_sf"/>
</dbReference>
<dbReference type="PANTHER" id="PTHR10338">
    <property type="entry name" value="INTER-ALPHA-TRYPSIN INHIBITOR HEAVY CHAIN FAMILY MEMBER"/>
    <property type="match status" value="1"/>
</dbReference>
<dbReference type="PANTHER" id="PTHR10338:SF62">
    <property type="entry name" value="INTER-ALPHA-TRYPSIN INHIBITOR HEAVY CHAIN H5"/>
    <property type="match status" value="1"/>
</dbReference>
<dbReference type="Pfam" id="PF06668">
    <property type="entry name" value="ITI_HC_C"/>
    <property type="match status" value="1"/>
</dbReference>
<dbReference type="Pfam" id="PF08487">
    <property type="entry name" value="VIT"/>
    <property type="match status" value="1"/>
</dbReference>
<dbReference type="Pfam" id="PF00092">
    <property type="entry name" value="VWA"/>
    <property type="match status" value="1"/>
</dbReference>
<dbReference type="SMART" id="SM00609">
    <property type="entry name" value="VIT"/>
    <property type="match status" value="1"/>
</dbReference>
<dbReference type="SMART" id="SM00327">
    <property type="entry name" value="VWA"/>
    <property type="match status" value="1"/>
</dbReference>
<dbReference type="SUPFAM" id="SSF53300">
    <property type="entry name" value="vWA-like"/>
    <property type="match status" value="1"/>
</dbReference>
<dbReference type="PROSITE" id="PS51468">
    <property type="entry name" value="VIT"/>
    <property type="match status" value="1"/>
</dbReference>
<dbReference type="PROSITE" id="PS50234">
    <property type="entry name" value="VWFA"/>
    <property type="match status" value="1"/>
</dbReference>
<gene>
    <name type="primary">Itih5</name>
</gene>
<accession>Q8BJD1</accession>
<accession>Q3US68</accession>
<accession>Q80VG0</accession>
<feature type="signal peptide" evidence="2">
    <location>
        <begin position="1"/>
        <end position="17"/>
    </location>
</feature>
<feature type="chain" id="PRO_0000331409" description="Inter-alpha-trypsin inhibitor heavy chain H5">
    <location>
        <begin position="18"/>
        <end position="952"/>
    </location>
</feature>
<feature type="domain" description="VIT" evidence="4">
    <location>
        <begin position="35"/>
        <end position="161"/>
    </location>
</feature>
<feature type="domain" description="VWFA" evidence="3">
    <location>
        <begin position="295"/>
        <end position="478"/>
    </location>
</feature>
<feature type="region of interest" description="Disordered" evidence="5">
    <location>
        <begin position="113"/>
        <end position="138"/>
    </location>
</feature>
<feature type="region of interest" description="Disordered" evidence="5">
    <location>
        <begin position="933"/>
        <end position="952"/>
    </location>
</feature>
<feature type="compositionally biased region" description="Basic and acidic residues" evidence="5">
    <location>
        <begin position="113"/>
        <end position="131"/>
    </location>
</feature>
<feature type="compositionally biased region" description="Basic and acidic residues" evidence="5">
    <location>
        <begin position="940"/>
        <end position="952"/>
    </location>
</feature>
<feature type="glycosylation site" description="N-linked (GlcNAc...) asparagine" evidence="2">
    <location>
        <position position="97"/>
    </location>
</feature>
<feature type="glycosylation site" description="N-linked (GlcNAc...) asparagine" evidence="2">
    <location>
        <position position="127"/>
    </location>
</feature>
<feature type="glycosylation site" description="N-linked (GlcNAc...) asparagine" evidence="2">
    <location>
        <position position="136"/>
    </location>
</feature>
<feature type="glycosylation site" description="N-linked (GlcNAc...) asparagine" evidence="2">
    <location>
        <position position="231"/>
    </location>
</feature>
<feature type="glycosylation site" description="N-linked (GlcNAc...) asparagine" evidence="2">
    <location>
        <position position="508"/>
    </location>
</feature>
<feature type="glycosylation site" description="N-linked (GlcNAc...) asparagine" evidence="2">
    <location>
        <position position="776"/>
    </location>
</feature>
<feature type="glycosylation site" description="N-linked (GlcNAc...) asparagine" evidence="2">
    <location>
        <position position="795"/>
    </location>
</feature>
<feature type="glycosylation site" description="N-linked (GlcNAc...) asparagine" evidence="2">
    <location>
        <position position="862"/>
    </location>
</feature>
<feature type="sequence conflict" description="In Ref. 1; BAE24467." evidence="6" ref="1">
    <original>E</original>
    <variation>K</variation>
    <location>
        <position position="16"/>
    </location>
</feature>
<proteinExistence type="evidence at protein level"/>
<name>ITIH5_MOUSE</name>
<sequence>MLLLLGLCLGLPLFSESQEEARSWDDTSEQVVLRVPRQLRLLQRLKTKPLMAEFSVKSTIISRYAFTTVSCRMLNRASEDQEAEFQMQIPESAFITNFTMLIGDSVYRGEITQKDKKSSESVKDKRNRTSDDNEENGSDMFKASLVIPSKDKAAFFLSYEELLQRRLGKYEHSISVRPQQLVGRLTVEVDILERSGITSLEVLPLHNSRKKGSGKAEGDVGPPPSTLINQNETFAKVIFKPTVVQQAKIAQNGILGDFIVRYDVEREQNIGDIQVLNGYFVHYFAPKNLPPLPKNVVFVLDISASMVGAKLQQTREALVTILNDLRPQDRFNIIGFSNRIKMWKDHLLPVTPDNIRNGKIYMYHLSPTGGTDINGALQAAIKLLNNYVAQNDIEDRSVSLIIFLTDGKPTFGETNTLKILSNTKEATRGQICIFTVGIGDDVDFKLLEKLSLENCGLTRRVHEEDKAGAQLIGFYDEIRTPLLSDIRIDYPPDVVEHATKTLFPNYFNGSEIVIAGKMVDKKFDQLHVEVTASNSKKFVILKRDIPVEFRKMGNDVSVTPGSARDGGKDLNHIERLWSYLTVKELLSSWRQSNSEQEKEQLRQKAQDLALNYHFLTPFTSMKLRKPGLRTNQLEDTYGMSAATGPATVVQNLREAGKQPEPDLKKTYDPRIKISKTSVDGDPHFVVDFPLSKLTVCFNIDGEPGDILRLVSDHLNSGVTVNGELIGAPAPPNGHKKQRTYFRTITILINRPERSYLEITPSRVILDGGDRLVLPCNQSVVVGSRGLEVSVSANANITVVIQGNIAFVILIHLYKNPAPFQRDHLGFYIANSRGLSDNCHGLLGQFLNQDAKLVGAPEEYGKNLSNQPFPRAEGMPEAILKVKGRRVPVVWKQRKIYNGQAQVDCWFDRNNAAKLIDGVYKDYLASHPFDTESALGLSTPRKPETDRPHEESV</sequence>